<reference key="1">
    <citation type="submission" date="2004-11" db="EMBL/GenBank/DDBJ databases">
        <authorList>
            <consortium name="The German cDNA consortium"/>
        </authorList>
    </citation>
    <scope>NUCLEOTIDE SEQUENCE [LARGE SCALE MRNA]</scope>
    <source>
        <tissue>Brain cortex</tissue>
    </source>
</reference>
<sequence>MSSSLGKEKDSKEKDPKVPSAKEREKEAKASGGFGKESKEKEPKTKGKDAKDGKKDSSAAQPGVAFSVDNTIKRPNPAPGTRKKSSNAEVIKELNKCREENSMRLDLSKRSIHILPSSIKELTQLTELYLYSNKLQSLPAEVGCLVNLMTLALSENSLTSLPDSLDNLKKLRMLDLRHNKLREIPSVVYRLDSLTTLYLRFNRITTVEKDIKNLSKLSMLSIRENKIKQLPAEIGELCNLITLDVAHNQLEHLPKEIGNCTQITNLDLQHNELLDLPDTIGNLSSLSRLGLRYNRLSAIPRSLAKCSALEELNLENNNISTLPESLLSSLVKLNSLTLARNCFQLYPVGGPSQFSTIYSLNMEHNRINKIPFGIFSRAKVLSKLNMKDNQLTSLPLDFGTWTSMVELNLATNQLTKIPEDVSGLVSLEVLILSNNLLKKLPHGLGNLRKLRELDLEENKLESLPNEIAYLKDLQKLVLTNNQLTTLPRGIGHLTNLTHLGLGENLLTHLPEEIGTLENLEELYLNDNPNLHSLPFELALCSKLSIMSIENCPLSHLPPQIVAGGPSFIIQFLKMQGPYRAMV</sequence>
<gene>
    <name type="primary">SHOC2</name>
</gene>
<proteinExistence type="evidence at transcript level"/>
<feature type="chain" id="PRO_0000317421" description="Leucine-rich repeat protein SHOC-2">
    <location>
        <begin position="1"/>
        <end position="582"/>
    </location>
</feature>
<feature type="repeat" description="LRR 1" evidence="1">
    <location>
        <begin position="101"/>
        <end position="122"/>
    </location>
</feature>
<feature type="repeat" description="LRR 2" evidence="1">
    <location>
        <begin position="124"/>
        <end position="145"/>
    </location>
</feature>
<feature type="repeat" description="LRR 3" evidence="1">
    <location>
        <begin position="147"/>
        <end position="169"/>
    </location>
</feature>
<feature type="repeat" description="LRR 4" evidence="1">
    <location>
        <begin position="170"/>
        <end position="191"/>
    </location>
</feature>
<feature type="repeat" description="LRR 5" evidence="1">
    <location>
        <begin position="193"/>
        <end position="214"/>
    </location>
</feature>
<feature type="repeat" description="LRR 6" evidence="1">
    <location>
        <begin position="216"/>
        <end position="237"/>
    </location>
</feature>
<feature type="repeat" description="LRR 7" evidence="1">
    <location>
        <begin position="239"/>
        <end position="260"/>
    </location>
</feature>
<feature type="repeat" description="LRR 8" evidence="1">
    <location>
        <begin position="262"/>
        <end position="283"/>
    </location>
</feature>
<feature type="repeat" description="LRR 9" evidence="1">
    <location>
        <begin position="285"/>
        <end position="307"/>
    </location>
</feature>
<feature type="repeat" description="LRR 10" evidence="1">
    <location>
        <begin position="308"/>
        <end position="329"/>
    </location>
</feature>
<feature type="repeat" description="LRR 11" evidence="1">
    <location>
        <begin position="332"/>
        <end position="353"/>
    </location>
</feature>
<feature type="repeat" description="LRR 12" evidence="1">
    <location>
        <begin position="356"/>
        <end position="377"/>
    </location>
</feature>
<feature type="repeat" description="LRR 13" evidence="1">
    <location>
        <begin position="380"/>
        <end position="400"/>
    </location>
</feature>
<feature type="repeat" description="LRR 14" evidence="1">
    <location>
        <begin position="403"/>
        <end position="424"/>
    </location>
</feature>
<feature type="repeat" description="LRR 15" evidence="1">
    <location>
        <begin position="426"/>
        <end position="448"/>
    </location>
</feature>
<feature type="repeat" description="LRR 16" evidence="1">
    <location>
        <begin position="449"/>
        <end position="470"/>
    </location>
</feature>
<feature type="repeat" description="LRR 17" evidence="1">
    <location>
        <begin position="472"/>
        <end position="494"/>
    </location>
</feature>
<feature type="repeat" description="LRR 18" evidence="1">
    <location>
        <begin position="495"/>
        <end position="516"/>
    </location>
</feature>
<feature type="repeat" description="LRR 19" evidence="1">
    <location>
        <begin position="518"/>
        <end position="540"/>
    </location>
</feature>
<feature type="repeat" description="LRR 20" evidence="1">
    <location>
        <begin position="542"/>
        <end position="563"/>
    </location>
</feature>
<feature type="region of interest" description="Disordered" evidence="2">
    <location>
        <begin position="1"/>
        <end position="88"/>
    </location>
</feature>
<feature type="short sequence motif" description="RVxF motif; important for interaction with PP1c" evidence="1">
    <location>
        <begin position="63"/>
        <end position="66"/>
    </location>
</feature>
<feature type="compositionally biased region" description="Basic and acidic residues" evidence="2">
    <location>
        <begin position="1"/>
        <end position="29"/>
    </location>
</feature>
<feature type="compositionally biased region" description="Basic and acidic residues" evidence="2">
    <location>
        <begin position="36"/>
        <end position="57"/>
    </location>
</feature>
<feature type="sequence conflict" description="In Ref. 1; CAH92905." evidence="3" ref="1">
    <original>A</original>
    <variation>T</variation>
    <location>
        <position position="28"/>
    </location>
</feature>
<feature type="sequence conflict" description="In Ref. 1; CAH92658." evidence="3" ref="1">
    <original>E</original>
    <variation>V</variation>
    <location>
        <position position="121"/>
    </location>
</feature>
<feature type="sequence conflict" description="In Ref. 1; CAH92905." evidence="3" ref="1">
    <original>S</original>
    <variation>A</variation>
    <location>
        <position position="157"/>
    </location>
</feature>
<feature type="sequence conflict" description="In Ref. 1; CAH91105." evidence="3" ref="1">
    <original>S</original>
    <variation>G</variation>
    <location>
        <position position="382"/>
    </location>
</feature>
<feature type="sequence conflict" description="In Ref. 1; CAH93493." evidence="3" ref="1">
    <original>L</original>
    <variation>P</variation>
    <location>
        <position position="414"/>
    </location>
</feature>
<feature type="sequence conflict" description="In Ref. 1; CAH93493." evidence="3" ref="1">
    <original>K</original>
    <variation>E</variation>
    <location>
        <position position="449"/>
    </location>
</feature>
<feature type="sequence conflict" description="In Ref. 1; CAH91105." evidence="3" ref="1">
    <original>L</original>
    <variation>I</variation>
    <location>
        <position position="473"/>
    </location>
</feature>
<comment type="function">
    <text evidence="1">Core component of the SHOC2-MRAS-PP1c (SMP) holophosphatase complex that regulates activation of the MAPK pathway (By similarity). Acts as a scaffolding protein in the SMP complex (By similarity). The SMP complex specifically dephosphorylates the inhibitory phosphorylation at 'Ser-259' of RAF1 kinase, 'Ser-365' of BRAF kinase and 'Ser-214' of ARAF kinase, stimulating their kinase activities (By similarity). The SMP complex enhances the dephosphorylation activity and substrate specificity of PP1c (By similarity).</text>
</comment>
<comment type="subunit">
    <text evidence="1">Component of the SHOC2-MRAS-PP1c (SMP) complex consisting of SHOC2, GTP-bound M-Ras/MRAS and the catalytic subunit of protein phosphatase 1 (either PPP1CA, PPP1CB or PPP1CC) (By similarity). SHOC2 and PP1c preferably bind M-Ras/MRAS, but they also bind K-Ras/KRAS, N-Ras/NRAS and H-Ras/HRAS; these interactions are GTP-dependent and both SHOC2 and PP1c are required to form a stable complex (By similarity). Interacts with PP1c in the absence of Ras GTPases (By similarity). Interacts with M-Ras/MRAS and RAF1 (By similarity). Interacts with ERBIN; disrupts the interaction with RAF1 and Ras, preventing the activation of the Ras signaling pathway (By similarity). Interacts with LZTR1 (By similarity).</text>
</comment>
<comment type="subcellular location">
    <subcellularLocation>
        <location evidence="1">Cytoplasm</location>
    </subcellularLocation>
    <subcellularLocation>
        <location evidence="1">Nucleus</location>
    </subcellularLocation>
    <text evidence="1">Translocates from cytoplasm to nucleus upon growth factor stimulation.</text>
</comment>
<comment type="domain">
    <text evidence="1">Contains a N-terminal RVxF motif that is important for interaction with PP1c.</text>
</comment>
<comment type="domain">
    <text evidence="1">PP1c (all isoforms) binds to the concave side of SHOC2, via LRR 2-5, 8-11, and 13-18 (By similarity). M-Ras/MRAS binds to the concave side of SHOC2, via LRR 1-10, 12 and 14-16 (By similarity).</text>
</comment>
<comment type="similarity">
    <text evidence="3">Belongs to the SHOC2 family.</text>
</comment>
<comment type="sequence caution" evidence="3">
    <conflict type="frameshift">
        <sequence resource="EMBL-CDS" id="CAH92658"/>
    </conflict>
</comment>
<accession>Q5RAV5</accession>
<accession>Q5R423</accession>
<accession>Q5R5R1</accession>
<accession>Q5R6F8</accession>
<name>SHOC2_PONAB</name>
<keyword id="KW-0963">Cytoplasm</keyword>
<keyword id="KW-0433">Leucine-rich repeat</keyword>
<keyword id="KW-0539">Nucleus</keyword>
<keyword id="KW-1185">Reference proteome</keyword>
<keyword id="KW-0677">Repeat</keyword>
<organism>
    <name type="scientific">Pongo abelii</name>
    <name type="common">Sumatran orangutan</name>
    <name type="synonym">Pongo pygmaeus abelii</name>
    <dbReference type="NCBI Taxonomy" id="9601"/>
    <lineage>
        <taxon>Eukaryota</taxon>
        <taxon>Metazoa</taxon>
        <taxon>Chordata</taxon>
        <taxon>Craniata</taxon>
        <taxon>Vertebrata</taxon>
        <taxon>Euteleostomi</taxon>
        <taxon>Mammalia</taxon>
        <taxon>Eutheria</taxon>
        <taxon>Euarchontoglires</taxon>
        <taxon>Primates</taxon>
        <taxon>Haplorrhini</taxon>
        <taxon>Catarrhini</taxon>
        <taxon>Hominidae</taxon>
        <taxon>Pongo</taxon>
    </lineage>
</organism>
<dbReference type="EMBL" id="CR858906">
    <property type="protein sequence ID" value="CAH91105.1"/>
    <property type="molecule type" value="mRNA"/>
</dbReference>
<dbReference type="EMBL" id="CR860532">
    <property type="protein sequence ID" value="CAH92658.1"/>
    <property type="status" value="ALT_FRAME"/>
    <property type="molecule type" value="mRNA"/>
</dbReference>
<dbReference type="EMBL" id="CR860795">
    <property type="protein sequence ID" value="CAH92905.1"/>
    <property type="molecule type" value="mRNA"/>
</dbReference>
<dbReference type="EMBL" id="CR861437">
    <property type="protein sequence ID" value="CAH93493.1"/>
    <property type="molecule type" value="mRNA"/>
</dbReference>
<dbReference type="RefSeq" id="NP_001126707.1">
    <property type="nucleotide sequence ID" value="NM_001133235.1"/>
</dbReference>
<dbReference type="RefSeq" id="NP_001128872.1">
    <property type="nucleotide sequence ID" value="NM_001135400.1"/>
</dbReference>
<dbReference type="SMR" id="Q5RAV5"/>
<dbReference type="FunCoup" id="Q5RAV5">
    <property type="interactions" value="5095"/>
</dbReference>
<dbReference type="STRING" id="9601.ENSPPYP00000003088"/>
<dbReference type="Ensembl" id="ENSPPYT00000003192.2">
    <property type="protein sequence ID" value="ENSPPYP00000003088.1"/>
    <property type="gene ID" value="ENSPPYG00000002651.3"/>
</dbReference>
<dbReference type="GeneID" id="100189801"/>
<dbReference type="CTD" id="8036"/>
<dbReference type="eggNOG" id="KOG0619">
    <property type="taxonomic scope" value="Eukaryota"/>
</dbReference>
<dbReference type="GeneTree" id="ENSGT00940000156270"/>
<dbReference type="HOGENOM" id="CLU_000288_18_23_1"/>
<dbReference type="InParanoid" id="Q5RAV5"/>
<dbReference type="OMA" id="NQFTSYP"/>
<dbReference type="OrthoDB" id="676979at2759"/>
<dbReference type="TreeFam" id="TF315742"/>
<dbReference type="Proteomes" id="UP000001595">
    <property type="component" value="Chromosome 10"/>
</dbReference>
<dbReference type="GO" id="GO:0005737">
    <property type="term" value="C:cytoplasm"/>
    <property type="evidence" value="ECO:0000250"/>
    <property type="project" value="UniProtKB"/>
</dbReference>
<dbReference type="GO" id="GO:0005829">
    <property type="term" value="C:cytosol"/>
    <property type="evidence" value="ECO:0007669"/>
    <property type="project" value="Ensembl"/>
</dbReference>
<dbReference type="GO" id="GO:0005654">
    <property type="term" value="C:nucleoplasm"/>
    <property type="evidence" value="ECO:0007669"/>
    <property type="project" value="Ensembl"/>
</dbReference>
<dbReference type="GO" id="GO:0005634">
    <property type="term" value="C:nucleus"/>
    <property type="evidence" value="ECO:0000250"/>
    <property type="project" value="UniProtKB"/>
</dbReference>
<dbReference type="GO" id="GO:0000164">
    <property type="term" value="C:protein phosphatase type 1 complex"/>
    <property type="evidence" value="ECO:0000250"/>
    <property type="project" value="UniProtKB"/>
</dbReference>
<dbReference type="GO" id="GO:0008157">
    <property type="term" value="F:protein phosphatase 1 binding"/>
    <property type="evidence" value="ECO:0007669"/>
    <property type="project" value="Ensembl"/>
</dbReference>
<dbReference type="GO" id="GO:0019903">
    <property type="term" value="F:protein phosphatase binding"/>
    <property type="evidence" value="ECO:0000250"/>
    <property type="project" value="UniProtKB"/>
</dbReference>
<dbReference type="GO" id="GO:0046579">
    <property type="term" value="P:positive regulation of Ras protein signal transduction"/>
    <property type="evidence" value="ECO:0000250"/>
    <property type="project" value="UniProtKB"/>
</dbReference>
<dbReference type="GO" id="GO:0043408">
    <property type="term" value="P:regulation of MAPK cascade"/>
    <property type="evidence" value="ECO:0007669"/>
    <property type="project" value="Ensembl"/>
</dbReference>
<dbReference type="FunFam" id="3.80.10.10:FF:000115">
    <property type="entry name" value="leucine-rich repeat protein SHOC-2"/>
    <property type="match status" value="1"/>
</dbReference>
<dbReference type="FunFam" id="3.80.10.10:FF:000327">
    <property type="entry name" value="leucine-rich repeat protein SHOC-2 isoform X2"/>
    <property type="match status" value="1"/>
</dbReference>
<dbReference type="FunFam" id="3.80.10.10:FF:000407">
    <property type="entry name" value="leucine-rich repeat protein SHOC-2 isoform X2"/>
    <property type="match status" value="1"/>
</dbReference>
<dbReference type="Gene3D" id="3.80.10.10">
    <property type="entry name" value="Ribonuclease Inhibitor"/>
    <property type="match status" value="4"/>
</dbReference>
<dbReference type="InterPro" id="IPR001611">
    <property type="entry name" value="Leu-rich_rpt"/>
</dbReference>
<dbReference type="InterPro" id="IPR003591">
    <property type="entry name" value="Leu-rich_rpt_typical-subtyp"/>
</dbReference>
<dbReference type="InterPro" id="IPR032675">
    <property type="entry name" value="LRR_dom_sf"/>
</dbReference>
<dbReference type="InterPro" id="IPR050216">
    <property type="entry name" value="LRR_domain-containing"/>
</dbReference>
<dbReference type="InterPro" id="IPR055414">
    <property type="entry name" value="LRR_R13L4/SHOC2-like"/>
</dbReference>
<dbReference type="PANTHER" id="PTHR48051">
    <property type="match status" value="1"/>
</dbReference>
<dbReference type="PANTHER" id="PTHR48051:SF54">
    <property type="entry name" value="LEUCINE-RICH REPEAT-CONTAINING PROTEIN"/>
    <property type="match status" value="1"/>
</dbReference>
<dbReference type="Pfam" id="PF23598">
    <property type="entry name" value="LRR_14"/>
    <property type="match status" value="2"/>
</dbReference>
<dbReference type="Pfam" id="PF13855">
    <property type="entry name" value="LRR_8"/>
    <property type="match status" value="1"/>
</dbReference>
<dbReference type="SMART" id="SM00364">
    <property type="entry name" value="LRR_BAC"/>
    <property type="match status" value="12"/>
</dbReference>
<dbReference type="SMART" id="SM00365">
    <property type="entry name" value="LRR_SD22"/>
    <property type="match status" value="6"/>
</dbReference>
<dbReference type="SMART" id="SM00369">
    <property type="entry name" value="LRR_TYP"/>
    <property type="match status" value="16"/>
</dbReference>
<dbReference type="SUPFAM" id="SSF52058">
    <property type="entry name" value="L domain-like"/>
    <property type="match status" value="2"/>
</dbReference>
<dbReference type="PROSITE" id="PS51450">
    <property type="entry name" value="LRR"/>
    <property type="match status" value="17"/>
</dbReference>
<evidence type="ECO:0000250" key="1">
    <source>
        <dbReference type="UniProtKB" id="Q9UQ13"/>
    </source>
</evidence>
<evidence type="ECO:0000256" key="2">
    <source>
        <dbReference type="SAM" id="MobiDB-lite"/>
    </source>
</evidence>
<evidence type="ECO:0000305" key="3"/>
<protein>
    <recommendedName>
        <fullName>Leucine-rich repeat protein SHOC-2</fullName>
    </recommendedName>
    <alternativeName>
        <fullName>Protein soc-2 homolog</fullName>
    </alternativeName>
    <alternativeName>
        <fullName>Protein sur-8 homolog</fullName>
    </alternativeName>
</protein>